<dbReference type="EC" id="2.5.1.75" evidence="1"/>
<dbReference type="EMBL" id="CP000142">
    <property type="protein sequence ID" value="ABA90335.2"/>
    <property type="molecule type" value="Genomic_DNA"/>
</dbReference>
<dbReference type="RefSeq" id="WP_011342895.1">
    <property type="nucleotide sequence ID" value="NC_007498.2"/>
</dbReference>
<dbReference type="SMR" id="Q39ZX2"/>
<dbReference type="STRING" id="338963.Pcar_3100"/>
<dbReference type="KEGG" id="pca:Pcar_3100"/>
<dbReference type="eggNOG" id="COG0324">
    <property type="taxonomic scope" value="Bacteria"/>
</dbReference>
<dbReference type="HOGENOM" id="CLU_032616_0_1_7"/>
<dbReference type="OrthoDB" id="9776390at2"/>
<dbReference type="Proteomes" id="UP000002534">
    <property type="component" value="Chromosome"/>
</dbReference>
<dbReference type="GO" id="GO:0005524">
    <property type="term" value="F:ATP binding"/>
    <property type="evidence" value="ECO:0007669"/>
    <property type="project" value="UniProtKB-UniRule"/>
</dbReference>
<dbReference type="GO" id="GO:0052381">
    <property type="term" value="F:tRNA dimethylallyltransferase activity"/>
    <property type="evidence" value="ECO:0007669"/>
    <property type="project" value="UniProtKB-UniRule"/>
</dbReference>
<dbReference type="GO" id="GO:0006400">
    <property type="term" value="P:tRNA modification"/>
    <property type="evidence" value="ECO:0007669"/>
    <property type="project" value="TreeGrafter"/>
</dbReference>
<dbReference type="Gene3D" id="3.40.50.300">
    <property type="entry name" value="P-loop containing nucleotide triphosphate hydrolases"/>
    <property type="match status" value="1"/>
</dbReference>
<dbReference type="HAMAP" id="MF_00185">
    <property type="entry name" value="IPP_trans"/>
    <property type="match status" value="1"/>
</dbReference>
<dbReference type="InterPro" id="IPR039657">
    <property type="entry name" value="Dimethylallyltransferase"/>
</dbReference>
<dbReference type="InterPro" id="IPR018022">
    <property type="entry name" value="IPT"/>
</dbReference>
<dbReference type="InterPro" id="IPR027417">
    <property type="entry name" value="P-loop_NTPase"/>
</dbReference>
<dbReference type="NCBIfam" id="TIGR00174">
    <property type="entry name" value="miaA"/>
    <property type="match status" value="1"/>
</dbReference>
<dbReference type="PANTHER" id="PTHR11088">
    <property type="entry name" value="TRNA DIMETHYLALLYLTRANSFERASE"/>
    <property type="match status" value="1"/>
</dbReference>
<dbReference type="PANTHER" id="PTHR11088:SF60">
    <property type="entry name" value="TRNA DIMETHYLALLYLTRANSFERASE"/>
    <property type="match status" value="1"/>
</dbReference>
<dbReference type="Pfam" id="PF01715">
    <property type="entry name" value="IPPT"/>
    <property type="match status" value="1"/>
</dbReference>
<dbReference type="SUPFAM" id="SSF52540">
    <property type="entry name" value="P-loop containing nucleoside triphosphate hydrolases"/>
    <property type="match status" value="1"/>
</dbReference>
<feature type="chain" id="PRO_0000377256" description="tRNA dimethylallyltransferase 2">
    <location>
        <begin position="1"/>
        <end position="298"/>
    </location>
</feature>
<feature type="region of interest" description="Interaction with substrate tRNA" evidence="1">
    <location>
        <begin position="35"/>
        <end position="38"/>
    </location>
</feature>
<feature type="binding site" evidence="1">
    <location>
        <begin position="10"/>
        <end position="17"/>
    </location>
    <ligand>
        <name>ATP</name>
        <dbReference type="ChEBI" id="CHEBI:30616"/>
    </ligand>
</feature>
<feature type="binding site" evidence="1">
    <location>
        <begin position="12"/>
        <end position="17"/>
    </location>
    <ligand>
        <name>substrate</name>
    </ligand>
</feature>
<feature type="site" description="Interaction with substrate tRNA" evidence="1">
    <location>
        <position position="100"/>
    </location>
</feature>
<name>MIAA2_SYNC1</name>
<keyword id="KW-0067">ATP-binding</keyword>
<keyword id="KW-0460">Magnesium</keyword>
<keyword id="KW-0547">Nucleotide-binding</keyword>
<keyword id="KW-1185">Reference proteome</keyword>
<keyword id="KW-0808">Transferase</keyword>
<keyword id="KW-0819">tRNA processing</keyword>
<comment type="function">
    <text evidence="1">Catalyzes the transfer of a dimethylallyl group onto the adenine at position 37 in tRNAs that read codons beginning with uridine, leading to the formation of N6-(dimethylallyl)adenosine (i(6)A).</text>
</comment>
<comment type="catalytic activity">
    <reaction evidence="1">
        <text>adenosine(37) in tRNA + dimethylallyl diphosphate = N(6)-dimethylallyladenosine(37) in tRNA + diphosphate</text>
        <dbReference type="Rhea" id="RHEA:26482"/>
        <dbReference type="Rhea" id="RHEA-COMP:10162"/>
        <dbReference type="Rhea" id="RHEA-COMP:10375"/>
        <dbReference type="ChEBI" id="CHEBI:33019"/>
        <dbReference type="ChEBI" id="CHEBI:57623"/>
        <dbReference type="ChEBI" id="CHEBI:74411"/>
        <dbReference type="ChEBI" id="CHEBI:74415"/>
        <dbReference type="EC" id="2.5.1.75"/>
    </reaction>
</comment>
<comment type="cofactor">
    <cofactor evidence="1">
        <name>Mg(2+)</name>
        <dbReference type="ChEBI" id="CHEBI:18420"/>
    </cofactor>
</comment>
<comment type="subunit">
    <text evidence="1">Monomer.</text>
</comment>
<comment type="similarity">
    <text evidence="1">Belongs to the IPP transferase family.</text>
</comment>
<gene>
    <name evidence="1" type="primary">miaA2</name>
    <name type="ordered locus">Pcar_3100</name>
</gene>
<sequence>MTCNLLVILGPTASGKTRLGVAAARALDGEIISADSRQVFRGMDIGTGKDLSEYGDVPYHLIDICEAGSEFSVFDFQERFCTAYADIRKRGRLPVLVGGTGLYLDCVLRNYRLVKVPENPVLRAELDPLSMDQLAERLRALKPEQHNTTDLGHRERLLRAIEIAEGEKACGETGPVLPGLRPLVFGVRWERAVLRRRITARLKERLDAGLIDEVQALLDAGVAHRMLEHYGLEYRLVSQHLRGELNRNDMFQKLNSAIHQFAKRQDTWFRRMERQGVQIHWLDGAGDPLQGLLRVFMS</sequence>
<accession>Q39ZX2</accession>
<protein>
    <recommendedName>
        <fullName evidence="1">tRNA dimethylallyltransferase 2</fullName>
        <ecNumber evidence="1">2.5.1.75</ecNumber>
    </recommendedName>
    <alternativeName>
        <fullName evidence="1">Dimethylallyl diphosphate:tRNA dimethylallyltransferase 2</fullName>
        <shortName evidence="1">DMAPP:tRNA dimethylallyltransferase 2</shortName>
        <shortName evidence="1">DMATase 2</shortName>
    </alternativeName>
    <alternativeName>
        <fullName evidence="1">Isopentenyl-diphosphate:tRNA isopentenyltransferase 2</fullName>
        <shortName evidence="1">IPP transferase 2</shortName>
        <shortName evidence="1">IPPT 2</shortName>
        <shortName evidence="1">IPTase 2</shortName>
    </alternativeName>
</protein>
<organism>
    <name type="scientific">Syntrophotalea carbinolica (strain DSM 2380 / NBRC 103641 / GraBd1)</name>
    <name type="common">Pelobacter carbinolicus</name>
    <dbReference type="NCBI Taxonomy" id="338963"/>
    <lineage>
        <taxon>Bacteria</taxon>
        <taxon>Pseudomonadati</taxon>
        <taxon>Thermodesulfobacteriota</taxon>
        <taxon>Desulfuromonadia</taxon>
        <taxon>Desulfuromonadales</taxon>
        <taxon>Syntrophotaleaceae</taxon>
        <taxon>Syntrophotalea</taxon>
    </lineage>
</organism>
<reference key="1">
    <citation type="submission" date="2005-10" db="EMBL/GenBank/DDBJ databases">
        <title>Complete sequence of Pelobacter carbinolicus DSM 2380.</title>
        <authorList>
            <person name="Copeland A."/>
            <person name="Lucas S."/>
            <person name="Lapidus A."/>
            <person name="Barry K."/>
            <person name="Detter J.C."/>
            <person name="Glavina T."/>
            <person name="Hammon N."/>
            <person name="Israni S."/>
            <person name="Pitluck S."/>
            <person name="Chertkov O."/>
            <person name="Schmutz J."/>
            <person name="Larimer F."/>
            <person name="Land M."/>
            <person name="Kyrpides N."/>
            <person name="Ivanova N."/>
            <person name="Richardson P."/>
        </authorList>
    </citation>
    <scope>NUCLEOTIDE SEQUENCE [LARGE SCALE GENOMIC DNA]</scope>
    <source>
        <strain>DSM 2380 / NBRC 103641 / GraBd1</strain>
    </source>
</reference>
<proteinExistence type="inferred from homology"/>
<evidence type="ECO:0000255" key="1">
    <source>
        <dbReference type="HAMAP-Rule" id="MF_00185"/>
    </source>
</evidence>